<proteinExistence type="evidence at protein level"/>
<sequence>MGFLLLWFCVLFLLVSRLRAVSFPEDDEPLNTVDYHYSRQYPVFRGRPSGNESQHRLDFQLMLKIRDTLYIAGRDQVYTVNLNEIPQTEVIPSKKLTWRSRQQDRENCAMKGKHKDECHNFIKVFVPRNDEMVFVCGTNAFNPMCRYYRLRTLEYDGEEISGLARCPFDARQTNVALFADGKLYSATVADFLASDAVIYRSMGDGSALRTIKYDSKWIKEPHFLHAIEYGNYVYFFFREIAVEHNNLGKAVYSRVARICKNDMGGSQRVLEKHWTSFLKARLNCSVPGDSFFYFDVLQSITDIIQINGIPTVVGVFTTQLNSIPGSAVCAFSMDDIEKVFKGRFKEQKTPDSVWTAVPEDKVPKPRPGCCAKHGLAEAYKTSIDFPDDTLAFIKSHPLMDSAVPPIADEPWFTKTRVRYRLTAIEVDRSAGPYQNYTVIFVGSEAGVVLKVLAKTSPFSLNDSVLLEEIEAYNPAKCSAESEEDRKVVSLQLDKDHHALYVAFSSCVVRIPLSRCERYGSCKKSCIASRDPYCGWLSQGVCERVTLGMLPGGYEQDTEYGNTAHLGDCHESLPPSTTPDYKIFGGPTSDMEVSSSSVTTVASSPEITSKVIDTWRPKLTSSRKFVVQDDPNTSDFTDTISGIPKGVRWEVQSGESNQMVHMNVLITCVFAAFVLGAFIAGVAVYCYRDMFVRKNRKIHKDAESAQSCTDSSGSFAKLNGLFDSPVKEYQQNIDSPKLYSNLLTSRKELPPNTDTKSMAVDHRGQPPELAALPTPESTPVLHQKTLQAMKSHSEKAHSHGASRKEHPQFFPSSPPPHSPLSHGHIPSAIVLPNATHDYNTSFSNSNAHKAEKKLQSMDHPLTKSSSKREHRRSVDSRNTLNDLLKHLNDPNSNPKAILGEIHMAHQTLMLDPVGPMAEVPPKVPNREASLYSPPSTLPRNSPTKRVDVPTTPGVPMTSLERQRGYHKNSSQRHSISAVPKNLNSPNGVLLSRQPSMNRGGYMPTPTGAKVDYIQGTPVSVHLQPSLSRQSSYTSNGTLPRTGLKRTPSLKPDVPPKPSFVPQTTSVRPLNKYTY</sequence>
<comment type="function">
    <text evidence="1 7">Shows growth cone collapsing activity on dorsal root ganglion (DRG) neurons in vitro. May be a stop signal for the DRG neurons in their target areas, and possibly also for other neurons. May also be involved in the maintenance and remodeling of neuronal connections (By similarity). Ligand of TREM2 with PLXNA1 as coreceptor in dendritic cells, plays a role in the generation of immune responses and skeletal homeostasis (PubMed:16715077).</text>
</comment>
<comment type="subcellular location">
    <subcellularLocation>
        <location evidence="12">Cell membrane</location>
        <topology evidence="1">Single-pass type I membrane protein</topology>
    </subcellularLocation>
</comment>
<comment type="alternative products">
    <event type="alternative splicing"/>
    <isoform>
        <id>Q76KF0-1</id>
        <name>4</name>
        <sequence type="displayed"/>
    </isoform>
    <isoform>
        <id>Q76KF0-2</id>
        <name>1</name>
        <sequence type="described" ref="VSP_016568 VSP_016569"/>
    </isoform>
    <isoform>
        <id>Q76KF0-3</id>
        <name>2</name>
        <sequence type="described" ref="VSP_016569"/>
    </isoform>
    <isoform>
        <id>Q76KF0-4</id>
        <name>3</name>
        <sequence type="described" ref="VSP_016571"/>
    </isoform>
    <isoform>
        <id>Q76KF0-5</id>
        <name>5</name>
        <sequence type="described" ref="VSP_016568 VSP_016571"/>
    </isoform>
    <isoform>
        <id>Q76KF0-6</id>
        <name>6</name>
        <sequence type="described" ref="VSP_016570"/>
    </isoform>
</comment>
<comment type="tissue specificity">
    <text evidence="6">Expressed in brain and lung.</text>
</comment>
<comment type="similarity">
    <text evidence="11">Belongs to the semaphorin family.</text>
</comment>
<comment type="sequence caution" evidence="11">
    <conflict type="erroneous initiation">
        <sequence resource="EMBL-CDS" id="BAC65797"/>
    </conflict>
    <text>Extended N-terminus.</text>
</comment>
<organism>
    <name type="scientific">Mus musculus</name>
    <name type="common">Mouse</name>
    <dbReference type="NCBI Taxonomy" id="10090"/>
    <lineage>
        <taxon>Eukaryota</taxon>
        <taxon>Metazoa</taxon>
        <taxon>Chordata</taxon>
        <taxon>Craniata</taxon>
        <taxon>Vertebrata</taxon>
        <taxon>Euteleostomi</taxon>
        <taxon>Mammalia</taxon>
        <taxon>Eutheria</taxon>
        <taxon>Euarchontoglires</taxon>
        <taxon>Glires</taxon>
        <taxon>Rodentia</taxon>
        <taxon>Myomorpha</taxon>
        <taxon>Muroidea</taxon>
        <taxon>Muridae</taxon>
        <taxon>Murinae</taxon>
        <taxon>Mus</taxon>
        <taxon>Mus</taxon>
    </lineage>
</organism>
<reference key="1">
    <citation type="journal article" date="2004" name="Biochem. Biophys. Res. Commun.">
        <title>Characterization of a novel member of murine semaphorin family.</title>
        <authorList>
            <person name="Taniguchi M."/>
            <person name="Shimizu T."/>
        </authorList>
    </citation>
    <scope>NUCLEOTIDE SEQUENCE [MRNA] (ISOFORMS 1; 2; 4; 5 AND 6)</scope>
    <scope>TISSUE SPECIFICITY</scope>
    <source>
        <strain>C57BL/6J</strain>
        <tissue>Brain</tissue>
    </source>
</reference>
<reference key="2">
    <citation type="journal article" date="2003" name="DNA Res.">
        <title>Prediction of the coding sequences of mouse homologues of KIAA gene: II. The complete nucleotide sequences of 400 mouse KIAA-homologous cDNAs identified by screening of terminal sequences of cDNA clones randomly sampled from size-fractionated libraries.</title>
        <authorList>
            <person name="Okazaki N."/>
            <person name="Kikuno R."/>
            <person name="Ohara R."/>
            <person name="Inamoto S."/>
            <person name="Aizawa H."/>
            <person name="Yuasa S."/>
            <person name="Nakajima D."/>
            <person name="Nagase T."/>
            <person name="Ohara O."/>
            <person name="Koga H."/>
        </authorList>
    </citation>
    <scope>NUCLEOTIDE SEQUENCE [LARGE SCALE MRNA] (ISOFORM 2)</scope>
    <source>
        <tissue>Brain</tissue>
    </source>
</reference>
<reference key="3">
    <citation type="journal article" date="2009" name="PLoS Biol.">
        <title>Lineage-specific biology revealed by a finished genome assembly of the mouse.</title>
        <authorList>
            <person name="Church D.M."/>
            <person name="Goodstadt L."/>
            <person name="Hillier L.W."/>
            <person name="Zody M.C."/>
            <person name="Goldstein S."/>
            <person name="She X."/>
            <person name="Bult C.J."/>
            <person name="Agarwala R."/>
            <person name="Cherry J.L."/>
            <person name="DiCuccio M."/>
            <person name="Hlavina W."/>
            <person name="Kapustin Y."/>
            <person name="Meric P."/>
            <person name="Maglott D."/>
            <person name="Birtle Z."/>
            <person name="Marques A.C."/>
            <person name="Graves T."/>
            <person name="Zhou S."/>
            <person name="Teague B."/>
            <person name="Potamousis K."/>
            <person name="Churas C."/>
            <person name="Place M."/>
            <person name="Herschleb J."/>
            <person name="Runnheim R."/>
            <person name="Forrest D."/>
            <person name="Amos-Landgraf J."/>
            <person name="Schwartz D.C."/>
            <person name="Cheng Z."/>
            <person name="Lindblad-Toh K."/>
            <person name="Eichler E.E."/>
            <person name="Ponting C.P."/>
        </authorList>
    </citation>
    <scope>NUCLEOTIDE SEQUENCE [LARGE SCALE GENOMIC DNA]</scope>
    <source>
        <strain>C57BL/6J</strain>
    </source>
</reference>
<reference key="4">
    <citation type="journal article" date="2004" name="Genome Res.">
        <title>The status, quality, and expansion of the NIH full-length cDNA project: the Mammalian Gene Collection (MGC).</title>
        <authorList>
            <consortium name="The MGC Project Team"/>
        </authorList>
    </citation>
    <scope>NUCLEOTIDE SEQUENCE [LARGE SCALE MRNA] (ISOFORM 2)</scope>
    <source>
        <strain>C57BL/6J</strain>
        <tissue>Brain</tissue>
    </source>
</reference>
<reference key="5">
    <citation type="journal article" date="2006" name="Nat. Cell Biol.">
        <title>Plexin-A1 and its interaction with DAP12 in immune responses and bone homeostasis.</title>
        <authorList>
            <person name="Takegahara N."/>
            <person name="Takamatsu H."/>
            <person name="Toyofuku T."/>
            <person name="Tsujimura T."/>
            <person name="Okuno T."/>
            <person name="Yukawa K."/>
            <person name="Mizui M."/>
            <person name="Yamamoto M."/>
            <person name="Prasad D.V."/>
            <person name="Suzuki K."/>
            <person name="Ishii M."/>
            <person name="Terai K."/>
            <person name="Moriya M."/>
            <person name="Nakatsuji Y."/>
            <person name="Sakoda S."/>
            <person name="Sato S."/>
            <person name="Akira S."/>
            <person name="Takeda K."/>
            <person name="Inui M."/>
            <person name="Takai T."/>
            <person name="Ikawa M."/>
            <person name="Okabe M."/>
            <person name="Kumanogoh A."/>
            <person name="Kikutani H."/>
        </authorList>
    </citation>
    <scope>FUNCTION</scope>
    <scope>SUBCELLULAR LOCATION</scope>
</reference>
<reference key="6">
    <citation type="journal article" date="2010" name="Cell">
        <title>A tissue-specific atlas of mouse protein phosphorylation and expression.</title>
        <authorList>
            <person name="Huttlin E.L."/>
            <person name="Jedrychowski M.P."/>
            <person name="Elias J.E."/>
            <person name="Goswami T."/>
            <person name="Rad R."/>
            <person name="Beausoleil S.A."/>
            <person name="Villen J."/>
            <person name="Haas W."/>
            <person name="Sowa M.E."/>
            <person name="Gygi S.P."/>
        </authorList>
    </citation>
    <scope>PHOSPHORYLATION [LARGE SCALE ANALYSIS] AT SER-723 AND SER-734</scope>
    <scope>IDENTIFICATION BY MASS SPECTROMETRY [LARGE SCALE ANALYSIS]</scope>
    <source>
        <tissue>Brain</tissue>
    </source>
</reference>
<evidence type="ECO:0000250" key="1"/>
<evidence type="ECO:0000250" key="2">
    <source>
        <dbReference type="UniProtKB" id="Q8NFY4"/>
    </source>
</evidence>
<evidence type="ECO:0000255" key="3"/>
<evidence type="ECO:0000255" key="4">
    <source>
        <dbReference type="PROSITE-ProRule" id="PRU00352"/>
    </source>
</evidence>
<evidence type="ECO:0000256" key="5">
    <source>
        <dbReference type="SAM" id="MobiDB-lite"/>
    </source>
</evidence>
<evidence type="ECO:0000269" key="6">
    <source>
    </source>
</evidence>
<evidence type="ECO:0000269" key="7">
    <source>
    </source>
</evidence>
<evidence type="ECO:0000303" key="8">
    <source>
    </source>
</evidence>
<evidence type="ECO:0000303" key="9">
    <source>
    </source>
</evidence>
<evidence type="ECO:0000303" key="10">
    <source>
    </source>
</evidence>
<evidence type="ECO:0000305" key="11"/>
<evidence type="ECO:0000305" key="12">
    <source>
    </source>
</evidence>
<evidence type="ECO:0007744" key="13">
    <source>
    </source>
</evidence>
<dbReference type="EMBL" id="AB091532">
    <property type="protein sequence ID" value="BAD05168.1"/>
    <property type="molecule type" value="mRNA"/>
</dbReference>
<dbReference type="EMBL" id="AB091533">
    <property type="protein sequence ID" value="BAD05169.1"/>
    <property type="molecule type" value="mRNA"/>
</dbReference>
<dbReference type="EMBL" id="AB091534">
    <property type="protein sequence ID" value="BAD05170.1"/>
    <property type="molecule type" value="mRNA"/>
</dbReference>
<dbReference type="EMBL" id="AB091535">
    <property type="protein sequence ID" value="BAD05171.1"/>
    <property type="molecule type" value="mRNA"/>
</dbReference>
<dbReference type="EMBL" id="AB091536">
    <property type="protein sequence ID" value="BAD05172.1"/>
    <property type="molecule type" value="mRNA"/>
</dbReference>
<dbReference type="EMBL" id="AK122515">
    <property type="protein sequence ID" value="BAC65797.1"/>
    <property type="status" value="ALT_INIT"/>
    <property type="molecule type" value="mRNA"/>
</dbReference>
<dbReference type="EMBL" id="AL935323">
    <property type="status" value="NOT_ANNOTATED_CDS"/>
    <property type="molecule type" value="Genomic_DNA"/>
</dbReference>
<dbReference type="EMBL" id="BC060680">
    <property type="protein sequence ID" value="AAH60680.1"/>
    <property type="molecule type" value="mRNA"/>
</dbReference>
<dbReference type="CCDS" id="CCDS16670.1">
    <molecule id="Q76KF0-2"/>
</dbReference>
<dbReference type="CCDS" id="CCDS16671.1">
    <molecule id="Q76KF0-3"/>
</dbReference>
<dbReference type="CCDS" id="CCDS16672.1">
    <molecule id="Q76KF0-6"/>
</dbReference>
<dbReference type="CCDS" id="CCDS16673.1">
    <molecule id="Q76KF0-1"/>
</dbReference>
<dbReference type="CCDS" id="CCDS38225.1">
    <molecule id="Q76KF0-5"/>
</dbReference>
<dbReference type="RefSeq" id="NP_001277926.1">
    <molecule id="Q76KF0-3"/>
    <property type="nucleotide sequence ID" value="NM_001290997.2"/>
</dbReference>
<dbReference type="RefSeq" id="NP_001277929.1">
    <property type="nucleotide sequence ID" value="NM_001291000.1"/>
</dbReference>
<dbReference type="RefSeq" id="NP_766125.2">
    <molecule id="Q76KF0-2"/>
    <property type="nucleotide sequence ID" value="NM_172537.4"/>
</dbReference>
<dbReference type="RefSeq" id="NP_954708.1">
    <molecule id="Q76KF0-3"/>
    <property type="nucleotide sequence ID" value="NM_199238.4"/>
</dbReference>
<dbReference type="RefSeq" id="NP_954709.1">
    <molecule id="Q76KF0-5"/>
    <property type="nucleotide sequence ID" value="NM_199239.4"/>
</dbReference>
<dbReference type="RefSeq" id="NP_954710.1">
    <molecule id="Q76KF0-6"/>
    <property type="nucleotide sequence ID" value="NM_199240.4"/>
</dbReference>
<dbReference type="RefSeq" id="NP_954711.1">
    <molecule id="Q76KF0-1"/>
    <property type="nucleotide sequence ID" value="NM_199241.4"/>
</dbReference>
<dbReference type="RefSeq" id="XP_011237729.1">
    <molecule id="Q76KF0-6"/>
    <property type="nucleotide sequence ID" value="XM_011239427.4"/>
</dbReference>
<dbReference type="RefSeq" id="XP_017172490.1">
    <molecule id="Q76KF0-1"/>
    <property type="nucleotide sequence ID" value="XM_017317001.2"/>
</dbReference>
<dbReference type="RefSeq" id="XP_017172501.1">
    <molecule id="Q76KF0-6"/>
    <property type="nucleotide sequence ID" value="XM_017317012.2"/>
</dbReference>
<dbReference type="RefSeq" id="XP_017172508.1">
    <property type="nucleotide sequence ID" value="XM_017317019.1"/>
</dbReference>
<dbReference type="RefSeq" id="XP_017172510.1">
    <property type="nucleotide sequence ID" value="XM_017317021.1"/>
</dbReference>
<dbReference type="RefSeq" id="XP_030105203.1">
    <molecule id="Q76KF0-1"/>
    <property type="nucleotide sequence ID" value="XM_030249343.2"/>
</dbReference>
<dbReference type="RefSeq" id="XP_030105205.1">
    <molecule id="Q76KF0-1"/>
    <property type="nucleotide sequence ID" value="XM_030249345.2"/>
</dbReference>
<dbReference type="RefSeq" id="XP_030105221.1">
    <molecule id="Q76KF0-6"/>
    <property type="nucleotide sequence ID" value="XM_030249361.2"/>
</dbReference>
<dbReference type="RefSeq" id="XP_030105228.1">
    <molecule id="Q76KF0-4"/>
    <property type="nucleotide sequence ID" value="XM_030249368.2"/>
</dbReference>
<dbReference type="RefSeq" id="XP_030105229.1">
    <molecule id="Q76KF0-2"/>
    <property type="nucleotide sequence ID" value="XM_030249369.2"/>
</dbReference>
<dbReference type="RefSeq" id="XP_030105231.1">
    <molecule id="Q76KF0-2"/>
    <property type="nucleotide sequence ID" value="XM_030249371.2"/>
</dbReference>
<dbReference type="RefSeq" id="XP_030105232.1">
    <molecule id="Q76KF0-3"/>
    <property type="nucleotide sequence ID" value="XM_030249372.2"/>
</dbReference>
<dbReference type="RefSeq" id="XP_030105233.1">
    <molecule id="Q76KF0-3"/>
    <property type="nucleotide sequence ID" value="XM_030249373.2"/>
</dbReference>
<dbReference type="RefSeq" id="XP_036016184.1">
    <molecule id="Q76KF0-1"/>
    <property type="nucleotide sequence ID" value="XM_036160291.1"/>
</dbReference>
<dbReference type="RefSeq" id="XP_036016208.1">
    <molecule id="Q76KF0-6"/>
    <property type="nucleotide sequence ID" value="XM_036160315.1"/>
</dbReference>
<dbReference type="RefSeq" id="XP_036016218.1">
    <molecule id="Q76KF0-5"/>
    <property type="nucleotide sequence ID" value="XM_036160325.1"/>
</dbReference>
<dbReference type="RefSeq" id="XP_036016219.1">
    <molecule id="Q76KF0-4"/>
    <property type="nucleotide sequence ID" value="XM_036160326.1"/>
</dbReference>
<dbReference type="RefSeq" id="XP_036016222.1">
    <molecule id="Q76KF0-3"/>
    <property type="nucleotide sequence ID" value="XM_036160329.1"/>
</dbReference>
<dbReference type="SMR" id="Q76KF0"/>
<dbReference type="BioGRID" id="229581">
    <property type="interactions" value="8"/>
</dbReference>
<dbReference type="FunCoup" id="Q76KF0">
    <property type="interactions" value="1427"/>
</dbReference>
<dbReference type="STRING" id="10090.ENSMUSP00000099529"/>
<dbReference type="GlyCosmos" id="Q76KF0">
    <property type="glycosylation" value="5 sites, No reported glycans"/>
</dbReference>
<dbReference type="GlyGen" id="Q76KF0">
    <property type="glycosylation" value="7 sites, 1 N-linked glycan (1 site), 1 O-linked glycan (2 sites)"/>
</dbReference>
<dbReference type="iPTMnet" id="Q76KF0"/>
<dbReference type="PhosphoSitePlus" id="Q76KF0"/>
<dbReference type="PaxDb" id="10090-ENSMUSP00000099529"/>
<dbReference type="ProteomicsDB" id="256949">
    <molecule id="Q76KF0-1"/>
</dbReference>
<dbReference type="ProteomicsDB" id="256950">
    <molecule id="Q76KF0-2"/>
</dbReference>
<dbReference type="ProteomicsDB" id="256951">
    <molecule id="Q76KF0-3"/>
</dbReference>
<dbReference type="ProteomicsDB" id="256952">
    <molecule id="Q76KF0-4"/>
</dbReference>
<dbReference type="ProteomicsDB" id="256953">
    <molecule id="Q76KF0-5"/>
</dbReference>
<dbReference type="ProteomicsDB" id="256954">
    <molecule id="Q76KF0-6"/>
</dbReference>
<dbReference type="Antibodypedia" id="24461">
    <property type="antibodies" value="176 antibodies from 28 providers"/>
</dbReference>
<dbReference type="DNASU" id="214968"/>
<dbReference type="Ensembl" id="ENSMUST00000051419.15">
    <molecule id="Q76KF0-2"/>
    <property type="protein sequence ID" value="ENSMUSP00000061123.9"/>
    <property type="gene ID" value="ENSMUSG00000027200.18"/>
</dbReference>
<dbReference type="Ensembl" id="ENSMUST00000076335.12">
    <molecule id="Q76KF0-3"/>
    <property type="protein sequence ID" value="ENSMUSP00000075674.6"/>
    <property type="gene ID" value="ENSMUSG00000027200.18"/>
</dbReference>
<dbReference type="Ensembl" id="ENSMUST00000077847.12">
    <molecule id="Q76KF0-6"/>
    <property type="protein sequence ID" value="ENSMUSP00000077014.6"/>
    <property type="gene ID" value="ENSMUSG00000027200.18"/>
</dbReference>
<dbReference type="Ensembl" id="ENSMUST00000078621.12">
    <molecule id="Q76KF0-5"/>
    <property type="protein sequence ID" value="ENSMUSP00000077691.6"/>
    <property type="gene ID" value="ENSMUSG00000027200.18"/>
</dbReference>
<dbReference type="Ensembl" id="ENSMUST00000103238.2">
    <molecule id="Q76KF0-6"/>
    <property type="protein sequence ID" value="ENSMUSP00000099528.2"/>
    <property type="gene ID" value="ENSMUSG00000027200.18"/>
</dbReference>
<dbReference type="Ensembl" id="ENSMUST00000103239.10">
    <molecule id="Q76KF0-1"/>
    <property type="protein sequence ID" value="ENSMUSP00000099529.4"/>
    <property type="gene ID" value="ENSMUSG00000027200.18"/>
</dbReference>
<dbReference type="Ensembl" id="ENSMUST00000103241.8">
    <molecule id="Q76KF0-3"/>
    <property type="protein sequence ID" value="ENSMUSP00000099531.2"/>
    <property type="gene ID" value="ENSMUSG00000027200.18"/>
</dbReference>
<dbReference type="GeneID" id="214968"/>
<dbReference type="KEGG" id="mmu:214968"/>
<dbReference type="UCSC" id="uc008mbk.2">
    <molecule id="Q76KF0-3"/>
    <property type="organism name" value="mouse"/>
</dbReference>
<dbReference type="UCSC" id="uc008mbo.2">
    <molecule id="Q76KF0-2"/>
    <property type="organism name" value="mouse"/>
</dbReference>
<dbReference type="UCSC" id="uc056zpa.1">
    <molecule id="Q76KF0-5"/>
    <property type="organism name" value="mouse"/>
</dbReference>
<dbReference type="UCSC" id="uc056zpb.1">
    <molecule id="Q76KF0-1"/>
    <property type="organism name" value="mouse"/>
</dbReference>
<dbReference type="UCSC" id="uc056zpc.1">
    <molecule id="Q76KF0-6"/>
    <property type="organism name" value="mouse"/>
</dbReference>
<dbReference type="AGR" id="MGI:2387661"/>
<dbReference type="CTD" id="80031"/>
<dbReference type="MGI" id="MGI:2387661">
    <property type="gene designation" value="Sema6d"/>
</dbReference>
<dbReference type="VEuPathDB" id="HostDB:ENSMUSG00000027200"/>
<dbReference type="eggNOG" id="KOG3611">
    <property type="taxonomic scope" value="Eukaryota"/>
</dbReference>
<dbReference type="GeneTree" id="ENSGT00940000159303"/>
<dbReference type="HOGENOM" id="CLU_009051_2_0_1"/>
<dbReference type="InParanoid" id="Q76KF0"/>
<dbReference type="OMA" id="EAYNHAX"/>
<dbReference type="OrthoDB" id="9988752at2759"/>
<dbReference type="PhylomeDB" id="Q76KF0"/>
<dbReference type="TreeFam" id="TF316102"/>
<dbReference type="Reactome" id="R-MMU-416700">
    <property type="pathway name" value="Other semaphorin interactions"/>
</dbReference>
<dbReference type="BioGRID-ORCS" id="214968">
    <property type="hits" value="1 hit in 79 CRISPR screens"/>
</dbReference>
<dbReference type="ChiTaRS" id="Sema6d">
    <property type="organism name" value="mouse"/>
</dbReference>
<dbReference type="PRO" id="PR:Q76KF0"/>
<dbReference type="Proteomes" id="UP000000589">
    <property type="component" value="Chromosome 2"/>
</dbReference>
<dbReference type="RNAct" id="Q76KF0">
    <property type="molecule type" value="protein"/>
</dbReference>
<dbReference type="Bgee" id="ENSMUSG00000027200">
    <property type="expression patterns" value="Expressed in ventral tegmental area and 243 other cell types or tissues"/>
</dbReference>
<dbReference type="ExpressionAtlas" id="Q76KF0">
    <property type="expression patterns" value="baseline and differential"/>
</dbReference>
<dbReference type="GO" id="GO:0062023">
    <property type="term" value="C:collagen-containing extracellular matrix"/>
    <property type="evidence" value="ECO:0007005"/>
    <property type="project" value="BHF-UCL"/>
</dbReference>
<dbReference type="GO" id="GO:0005794">
    <property type="term" value="C:Golgi apparatus"/>
    <property type="evidence" value="ECO:0007669"/>
    <property type="project" value="Ensembl"/>
</dbReference>
<dbReference type="GO" id="GO:0005886">
    <property type="term" value="C:plasma membrane"/>
    <property type="evidence" value="ECO:0007669"/>
    <property type="project" value="UniProtKB-SubCell"/>
</dbReference>
<dbReference type="GO" id="GO:0048018">
    <property type="term" value="F:receptor ligand activity"/>
    <property type="evidence" value="ECO:0000314"/>
    <property type="project" value="UniProtKB"/>
</dbReference>
<dbReference type="GO" id="GO:0030215">
    <property type="term" value="F:semaphorin receptor binding"/>
    <property type="evidence" value="ECO:0000353"/>
    <property type="project" value="MGI"/>
</dbReference>
<dbReference type="GO" id="GO:0030154">
    <property type="term" value="P:cell differentiation"/>
    <property type="evidence" value="ECO:0007669"/>
    <property type="project" value="UniProtKB-KW"/>
</dbReference>
<dbReference type="GO" id="GO:0014912">
    <property type="term" value="P:negative regulation of smooth muscle cell migration"/>
    <property type="evidence" value="ECO:0000314"/>
    <property type="project" value="MGI"/>
</dbReference>
<dbReference type="GO" id="GO:0014911">
    <property type="term" value="P:positive regulation of smooth muscle cell migration"/>
    <property type="evidence" value="ECO:0000314"/>
    <property type="project" value="MGI"/>
</dbReference>
<dbReference type="GO" id="GO:0071526">
    <property type="term" value="P:semaphorin-plexin signaling pathway"/>
    <property type="evidence" value="ECO:0000314"/>
    <property type="project" value="UniProtKB"/>
</dbReference>
<dbReference type="GO" id="GO:0014909">
    <property type="term" value="P:smooth muscle cell migration"/>
    <property type="evidence" value="ECO:0000314"/>
    <property type="project" value="MGI"/>
</dbReference>
<dbReference type="GO" id="GO:0002291">
    <property type="term" value="P:T cell activation via T cell receptor contact with antigen bound to MHC molecule on antigen presenting cell"/>
    <property type="evidence" value="ECO:0000314"/>
    <property type="project" value="UniProtKB"/>
</dbReference>
<dbReference type="GO" id="GO:0021591">
    <property type="term" value="P:ventricular system development"/>
    <property type="evidence" value="ECO:0000314"/>
    <property type="project" value="MGI"/>
</dbReference>
<dbReference type="FunFam" id="3.30.1680.10:FF:000004">
    <property type="entry name" value="semaphorin-6D isoform X1"/>
    <property type="match status" value="1"/>
</dbReference>
<dbReference type="FunFam" id="2.130.10.10:FF:000013">
    <property type="entry name" value="semaphorin-6D isoform X2"/>
    <property type="match status" value="1"/>
</dbReference>
<dbReference type="Gene3D" id="3.30.1680.10">
    <property type="entry name" value="ligand-binding face of the semaphorins, domain 2"/>
    <property type="match status" value="1"/>
</dbReference>
<dbReference type="Gene3D" id="2.130.10.10">
    <property type="entry name" value="YVTN repeat-like/Quinoprotein amine dehydrogenase"/>
    <property type="match status" value="1"/>
</dbReference>
<dbReference type="InterPro" id="IPR002165">
    <property type="entry name" value="Plexin_repeat"/>
</dbReference>
<dbReference type="InterPro" id="IPR001627">
    <property type="entry name" value="Semap_dom"/>
</dbReference>
<dbReference type="InterPro" id="IPR036352">
    <property type="entry name" value="Semap_dom_sf"/>
</dbReference>
<dbReference type="InterPro" id="IPR027231">
    <property type="entry name" value="Semaphorin"/>
</dbReference>
<dbReference type="InterPro" id="IPR015943">
    <property type="entry name" value="WD40/YVTN_repeat-like_dom_sf"/>
</dbReference>
<dbReference type="PANTHER" id="PTHR11036">
    <property type="entry name" value="SEMAPHORIN"/>
    <property type="match status" value="1"/>
</dbReference>
<dbReference type="PANTHER" id="PTHR11036:SF65">
    <property type="entry name" value="SEMAPHORIN-6D"/>
    <property type="match status" value="1"/>
</dbReference>
<dbReference type="Pfam" id="PF01437">
    <property type="entry name" value="PSI"/>
    <property type="match status" value="1"/>
</dbReference>
<dbReference type="Pfam" id="PF01403">
    <property type="entry name" value="Sema"/>
    <property type="match status" value="1"/>
</dbReference>
<dbReference type="SMART" id="SM00630">
    <property type="entry name" value="Sema"/>
    <property type="match status" value="1"/>
</dbReference>
<dbReference type="SUPFAM" id="SSF103575">
    <property type="entry name" value="Plexin repeat"/>
    <property type="match status" value="1"/>
</dbReference>
<dbReference type="SUPFAM" id="SSF101912">
    <property type="entry name" value="Sema domain"/>
    <property type="match status" value="1"/>
</dbReference>
<dbReference type="PROSITE" id="PS51004">
    <property type="entry name" value="SEMA"/>
    <property type="match status" value="1"/>
</dbReference>
<protein>
    <recommendedName>
        <fullName>Semaphorin-6D</fullName>
    </recommendedName>
</protein>
<feature type="signal peptide" evidence="3">
    <location>
        <begin position="1"/>
        <end position="20"/>
    </location>
</feature>
<feature type="chain" id="PRO_0000044616" description="Semaphorin-6D">
    <location>
        <begin position="21"/>
        <end position="1073"/>
    </location>
</feature>
<feature type="topological domain" description="Extracellular" evidence="3">
    <location>
        <begin position="21"/>
        <end position="662"/>
    </location>
</feature>
<feature type="transmembrane region" description="Helical" evidence="3">
    <location>
        <begin position="663"/>
        <end position="683"/>
    </location>
</feature>
<feature type="topological domain" description="Cytoplasmic" evidence="3">
    <location>
        <begin position="684"/>
        <end position="1073"/>
    </location>
</feature>
<feature type="domain" description="Sema" evidence="4">
    <location>
        <begin position="27"/>
        <end position="512"/>
    </location>
</feature>
<feature type="domain" description="PSI">
    <location>
        <begin position="514"/>
        <end position="569"/>
    </location>
</feature>
<feature type="region of interest" description="Disordered" evidence="5">
    <location>
        <begin position="745"/>
        <end position="825"/>
    </location>
</feature>
<feature type="region of interest" description="Disordered" evidence="5">
    <location>
        <begin position="839"/>
        <end position="876"/>
    </location>
</feature>
<feature type="region of interest" description="Disordered" evidence="5">
    <location>
        <begin position="919"/>
        <end position="986"/>
    </location>
</feature>
<feature type="region of interest" description="Disordered" evidence="5">
    <location>
        <begin position="1021"/>
        <end position="1073"/>
    </location>
</feature>
<feature type="compositionally biased region" description="Basic and acidic residues" evidence="5">
    <location>
        <begin position="790"/>
        <end position="806"/>
    </location>
</feature>
<feature type="compositionally biased region" description="Polar residues" evidence="5">
    <location>
        <begin position="931"/>
        <end position="942"/>
    </location>
</feature>
<feature type="compositionally biased region" description="Polar residues" evidence="5">
    <location>
        <begin position="1021"/>
        <end position="1037"/>
    </location>
</feature>
<feature type="compositionally biased region" description="Polar residues" evidence="5">
    <location>
        <begin position="1059"/>
        <end position="1073"/>
    </location>
</feature>
<feature type="modified residue" description="Phosphoserine" evidence="13">
    <location>
        <position position="723"/>
    </location>
</feature>
<feature type="modified residue" description="Phosphoserine" evidence="13">
    <location>
        <position position="734"/>
    </location>
</feature>
<feature type="modified residue" description="Phosphoserine" evidence="2">
    <location>
        <position position="744"/>
    </location>
</feature>
<feature type="modified residue" description="Phosphothreonine" evidence="2">
    <location>
        <position position="773"/>
    </location>
</feature>
<feature type="modified residue" description="Phosphoserine" evidence="2">
    <location>
        <position position="931"/>
    </location>
</feature>
<feature type="modified residue" description="Phosphoserine" evidence="2">
    <location>
        <position position="957"/>
    </location>
</feature>
<feature type="modified residue" description="Phosphoserine" evidence="2">
    <location>
        <position position="983"/>
    </location>
</feature>
<feature type="glycosylation site" description="N-linked (GlcNAc...) asparagine" evidence="3">
    <location>
        <position position="51"/>
    </location>
</feature>
<feature type="glycosylation site" description="N-linked (GlcNAc...) asparagine" evidence="3">
    <location>
        <position position="283"/>
    </location>
</feature>
<feature type="glycosylation site" description="N-linked (GlcNAc...) asparagine" evidence="3">
    <location>
        <position position="435"/>
    </location>
</feature>
<feature type="glycosylation site" description="N-linked (GlcNAc...) asparagine" evidence="3">
    <location>
        <position position="461"/>
    </location>
</feature>
<feature type="glycosylation site" description="N-linked (GlcNAc...) asparagine" evidence="3">
    <location>
        <position position="631"/>
    </location>
</feature>
<feature type="disulfide bond" evidence="4">
    <location>
        <begin position="108"/>
        <end position="118"/>
    </location>
</feature>
<feature type="disulfide bond" evidence="4">
    <location>
        <begin position="136"/>
        <end position="145"/>
    </location>
</feature>
<feature type="disulfide bond" evidence="4">
    <location>
        <begin position="259"/>
        <end position="370"/>
    </location>
</feature>
<feature type="disulfide bond" evidence="4">
    <location>
        <begin position="284"/>
        <end position="329"/>
    </location>
</feature>
<feature type="disulfide bond" evidence="4">
    <location>
        <begin position="477"/>
        <end position="506"/>
    </location>
</feature>
<feature type="disulfide bond" evidence="4">
    <location>
        <begin position="515"/>
        <end position="533"/>
    </location>
</feature>
<feature type="disulfide bond" evidence="4">
    <location>
        <begin position="521"/>
        <end position="568"/>
    </location>
</feature>
<feature type="disulfide bond" evidence="4">
    <location>
        <begin position="525"/>
        <end position="541"/>
    </location>
</feature>
<feature type="splice variant" id="VSP_016568" description="In isoform 1 and isoform 5." evidence="9">
    <original>L</original>
    <variation>LLLTEDFFAFHNHS</variation>
    <location>
        <position position="549"/>
    </location>
</feature>
<feature type="splice variant" id="VSP_016569" description="In isoform 1 and isoform 2." evidence="8 9 10">
    <location>
        <begin position="570"/>
        <end position="644"/>
    </location>
</feature>
<feature type="splice variant" id="VSP_016570" description="In isoform 6." evidence="9">
    <location>
        <begin position="570"/>
        <end position="588"/>
    </location>
</feature>
<feature type="splice variant" id="VSP_016571" description="In isoform 3 and isoform 5." evidence="9">
    <location>
        <begin position="589"/>
        <end position="644"/>
    </location>
</feature>
<gene>
    <name type="primary">Sema6d</name>
    <name type="synonym">Kiaa1479</name>
</gene>
<name>SEM6D_MOUSE</name>
<keyword id="KW-0025">Alternative splicing</keyword>
<keyword id="KW-1003">Cell membrane</keyword>
<keyword id="KW-0217">Developmental protein</keyword>
<keyword id="KW-0221">Differentiation</keyword>
<keyword id="KW-1015">Disulfide bond</keyword>
<keyword id="KW-0325">Glycoprotein</keyword>
<keyword id="KW-0472">Membrane</keyword>
<keyword id="KW-0524">Neurogenesis</keyword>
<keyword id="KW-0597">Phosphoprotein</keyword>
<keyword id="KW-1185">Reference proteome</keyword>
<keyword id="KW-0732">Signal</keyword>
<keyword id="KW-0812">Transmembrane</keyword>
<keyword id="KW-1133">Transmembrane helix</keyword>
<accession>Q76KF0</accession>
<accession>A2AW72</accession>
<accession>Q76KF1</accession>
<accession>Q76KF2</accession>
<accession>Q76KF3</accession>
<accession>Q76KF4</accession>
<accession>Q80TD0</accession>